<name>BEE1_ARATH</name>
<gene>
    <name type="primary">BEE1</name>
    <name type="synonym">BHLH44</name>
    <name type="synonym">EN77</name>
    <name type="ordered locus">At1g18400</name>
    <name type="ORF">F15H18.11</name>
    <name type="ORF">F15H18.16</name>
</gene>
<accession>Q8GZ13</accession>
<accession>Q9LPQ6</accession>
<organism>
    <name type="scientific">Arabidopsis thaliana</name>
    <name type="common">Mouse-ear cress</name>
    <dbReference type="NCBI Taxonomy" id="3702"/>
    <lineage>
        <taxon>Eukaryota</taxon>
        <taxon>Viridiplantae</taxon>
        <taxon>Streptophyta</taxon>
        <taxon>Embryophyta</taxon>
        <taxon>Tracheophyta</taxon>
        <taxon>Spermatophyta</taxon>
        <taxon>Magnoliopsida</taxon>
        <taxon>eudicotyledons</taxon>
        <taxon>Gunneridae</taxon>
        <taxon>Pentapetalae</taxon>
        <taxon>rosids</taxon>
        <taxon>malvids</taxon>
        <taxon>Brassicales</taxon>
        <taxon>Brassicaceae</taxon>
        <taxon>Camelineae</taxon>
        <taxon>Arabidopsis</taxon>
    </lineage>
</organism>
<evidence type="ECO:0000255" key="1">
    <source>
        <dbReference type="PROSITE-ProRule" id="PRU00981"/>
    </source>
</evidence>
<evidence type="ECO:0000256" key="2">
    <source>
        <dbReference type="SAM" id="MobiDB-lite"/>
    </source>
</evidence>
<evidence type="ECO:0000269" key="3">
    <source>
    </source>
</evidence>
<evidence type="ECO:0000305" key="4"/>
<feature type="chain" id="PRO_0000302042" description="Transcription factor BEE 1">
    <location>
        <begin position="1"/>
        <end position="260"/>
    </location>
</feature>
<feature type="domain" description="bHLH" evidence="1">
    <location>
        <begin position="151"/>
        <end position="201"/>
    </location>
</feature>
<feature type="region of interest" description="Disordered" evidence="2">
    <location>
        <begin position="118"/>
        <end position="139"/>
    </location>
</feature>
<feature type="sequence conflict" description="In Ref. 2; AF488579." evidence="4" ref="2">
    <original>H</original>
    <variation>P</variation>
    <location>
        <position position="144"/>
    </location>
</feature>
<comment type="function">
    <text evidence="3">Positive regulator of brassinosteroid signaling.</text>
</comment>
<comment type="interaction">
    <interactant intactId="EBI-4440101">
        <id>Q8GZ13</id>
    </interactant>
    <interactant intactId="EBI-1536734">
        <id>Q9LXD8</id>
        <label>HEC3</label>
    </interactant>
    <organismsDiffer>false</organismsDiffer>
    <experiments>4</experiments>
</comment>
<comment type="interaction">
    <interactant intactId="EBI-4440101">
        <id>Q8GZ13</id>
    </interactant>
    <interactant intactId="EBI-1645478">
        <id>Q38845</id>
        <label>PP2AA1</label>
    </interactant>
    <organismsDiffer>false</organismsDiffer>
    <experiments>3</experiments>
</comment>
<comment type="interaction">
    <interactant intactId="EBI-4440101">
        <id>Q8GZ13</id>
    </interactant>
    <interactant intactId="EBI-1238460">
        <id>Q9FHZ1</id>
        <label>SCL23</label>
    </interactant>
    <organismsDiffer>false</organismsDiffer>
    <experiments>5</experiments>
</comment>
<comment type="interaction">
    <interactant intactId="EBI-4440101">
        <id>Q8GZ13</id>
    </interactant>
    <interactant intactId="EBI-15192297">
        <id>Q9LQF0</id>
        <label>TCP23</label>
    </interactant>
    <organismsDiffer>false</organismsDiffer>
    <experiments>3</experiments>
</comment>
<comment type="subcellular location">
    <subcellularLocation>
        <location evidence="4">Nucleus</location>
    </subcellularLocation>
</comment>
<comment type="induction">
    <text evidence="3">Induced by brassinosteroid, auxin, ethylene and cytokinin, and repressed by abscisic acid. Insensitive to gibberellic acid.</text>
</comment>
<comment type="disruption phenotype">
    <text evidence="3">No visible phenotype. Redundant with BEE2 and BEE3.</text>
</comment>
<comment type="sequence caution" evidence="4">
    <conflict type="erroneous gene model prediction">
        <sequence resource="EMBL-CDS" id="AAF25996"/>
    </conflict>
    <text>The predicted gene has been split into 2 genes: At1g18390 and At1g18400.</text>
</comment>
<protein>
    <recommendedName>
        <fullName>Transcription factor BEE 1</fullName>
    </recommendedName>
    <alternativeName>
        <fullName>Basic helix-loop-helix protein 44</fullName>
        <shortName>AtbHLH44</shortName>
        <shortName>bHLH 44</shortName>
    </alternativeName>
    <alternativeName>
        <fullName>Protein Brassinosteroid enhanced expression 1</fullName>
    </alternativeName>
    <alternativeName>
        <fullName>Transcription factor EN 77</fullName>
    </alternativeName>
    <alternativeName>
        <fullName>bHLH transcription factor bHLH044</fullName>
    </alternativeName>
</protein>
<dbReference type="EMBL" id="AY138253">
    <property type="protein sequence ID" value="AAN18283.1"/>
    <property type="molecule type" value="mRNA"/>
</dbReference>
<dbReference type="EMBL" id="AF488579">
    <property type="status" value="NOT_ANNOTATED_CDS"/>
    <property type="molecule type" value="mRNA"/>
</dbReference>
<dbReference type="EMBL" id="AC013354">
    <property type="protein sequence ID" value="AAF25996.1"/>
    <property type="status" value="ALT_SEQ"/>
    <property type="molecule type" value="Genomic_DNA"/>
</dbReference>
<dbReference type="EMBL" id="CP002684">
    <property type="protein sequence ID" value="AEE29711.1"/>
    <property type="molecule type" value="Genomic_DNA"/>
</dbReference>
<dbReference type="EMBL" id="AK117269">
    <property type="protein sequence ID" value="BAC41942.1"/>
    <property type="molecule type" value="mRNA"/>
</dbReference>
<dbReference type="EMBL" id="BT005268">
    <property type="protein sequence ID" value="AAO63332.1"/>
    <property type="molecule type" value="mRNA"/>
</dbReference>
<dbReference type="RefSeq" id="NP_173276.2">
    <property type="nucleotide sequence ID" value="NM_101698.3"/>
</dbReference>
<dbReference type="SMR" id="Q8GZ13"/>
<dbReference type="BioGRID" id="23660">
    <property type="interactions" value="17"/>
</dbReference>
<dbReference type="FunCoup" id="Q8GZ13">
    <property type="interactions" value="101"/>
</dbReference>
<dbReference type="IntAct" id="Q8GZ13">
    <property type="interactions" value="24"/>
</dbReference>
<dbReference type="MINT" id="Q8GZ13"/>
<dbReference type="STRING" id="3702.Q8GZ13"/>
<dbReference type="PaxDb" id="3702-AT1G18400.1"/>
<dbReference type="EnsemblPlants" id="AT1G18400.1">
    <property type="protein sequence ID" value="AT1G18400.1"/>
    <property type="gene ID" value="AT1G18400"/>
</dbReference>
<dbReference type="GeneID" id="838421"/>
<dbReference type="Gramene" id="AT1G18400.1">
    <property type="protein sequence ID" value="AT1G18400.1"/>
    <property type="gene ID" value="AT1G18400"/>
</dbReference>
<dbReference type="KEGG" id="ath:AT1G18400"/>
<dbReference type="Araport" id="AT1G18400"/>
<dbReference type="TAIR" id="AT1G18400">
    <property type="gene designation" value="BEE1"/>
</dbReference>
<dbReference type="eggNOG" id="ENOG502QTM9">
    <property type="taxonomic scope" value="Eukaryota"/>
</dbReference>
<dbReference type="HOGENOM" id="CLU_089115_0_0_1"/>
<dbReference type="InParanoid" id="Q8GZ13"/>
<dbReference type="OMA" id="HQQHFPG"/>
<dbReference type="PhylomeDB" id="Q8GZ13"/>
<dbReference type="PRO" id="PR:Q8GZ13"/>
<dbReference type="Proteomes" id="UP000006548">
    <property type="component" value="Chromosome 1"/>
</dbReference>
<dbReference type="ExpressionAtlas" id="Q8GZ13">
    <property type="expression patterns" value="baseline and differential"/>
</dbReference>
<dbReference type="GO" id="GO:0005634">
    <property type="term" value="C:nucleus"/>
    <property type="evidence" value="ECO:0000314"/>
    <property type="project" value="TAIR"/>
</dbReference>
<dbReference type="GO" id="GO:0003677">
    <property type="term" value="F:DNA binding"/>
    <property type="evidence" value="ECO:0000314"/>
    <property type="project" value="TAIR"/>
</dbReference>
<dbReference type="GO" id="GO:0003700">
    <property type="term" value="F:DNA-binding transcription factor activity"/>
    <property type="evidence" value="ECO:0000250"/>
    <property type="project" value="TAIR"/>
</dbReference>
<dbReference type="GO" id="GO:0046983">
    <property type="term" value="F:protein dimerization activity"/>
    <property type="evidence" value="ECO:0007669"/>
    <property type="project" value="InterPro"/>
</dbReference>
<dbReference type="GO" id="GO:0006351">
    <property type="term" value="P:DNA-templated transcription"/>
    <property type="evidence" value="ECO:0000315"/>
    <property type="project" value="TAIR"/>
</dbReference>
<dbReference type="GO" id="GO:1902448">
    <property type="term" value="P:positive regulation of shade avoidance"/>
    <property type="evidence" value="ECO:0000315"/>
    <property type="project" value="TAIR"/>
</dbReference>
<dbReference type="GO" id="GO:0006355">
    <property type="term" value="P:regulation of DNA-templated transcription"/>
    <property type="evidence" value="ECO:0000304"/>
    <property type="project" value="TAIR"/>
</dbReference>
<dbReference type="GO" id="GO:2000762">
    <property type="term" value="P:regulation of phenylpropanoid metabolic process"/>
    <property type="evidence" value="ECO:0000315"/>
    <property type="project" value="TAIR"/>
</dbReference>
<dbReference type="CDD" id="cd18919">
    <property type="entry name" value="bHLH_AtBPE_like"/>
    <property type="match status" value="1"/>
</dbReference>
<dbReference type="FunFam" id="4.10.280.10:FF:000058">
    <property type="entry name" value="transcription factor BEE 3-like"/>
    <property type="match status" value="1"/>
</dbReference>
<dbReference type="Gene3D" id="4.10.280.10">
    <property type="entry name" value="Helix-loop-helix DNA-binding domain"/>
    <property type="match status" value="1"/>
</dbReference>
<dbReference type="InterPro" id="IPR011598">
    <property type="entry name" value="bHLH_dom"/>
</dbReference>
<dbReference type="InterPro" id="IPR024097">
    <property type="entry name" value="bHLH_ZIP_TF"/>
</dbReference>
<dbReference type="InterPro" id="IPR036638">
    <property type="entry name" value="HLH_DNA-bd_sf"/>
</dbReference>
<dbReference type="PANTHER" id="PTHR12565">
    <property type="entry name" value="STEROL REGULATORY ELEMENT-BINDING PROTEIN"/>
    <property type="match status" value="1"/>
</dbReference>
<dbReference type="PANTHER" id="PTHR12565:SF414">
    <property type="entry name" value="TRANSCRIPTION FACTOR BEE 1"/>
    <property type="match status" value="1"/>
</dbReference>
<dbReference type="Pfam" id="PF00010">
    <property type="entry name" value="HLH"/>
    <property type="match status" value="1"/>
</dbReference>
<dbReference type="SMART" id="SM00353">
    <property type="entry name" value="HLH"/>
    <property type="match status" value="1"/>
</dbReference>
<dbReference type="SUPFAM" id="SSF47459">
    <property type="entry name" value="HLH, helix-loop-helix DNA-binding domain"/>
    <property type="match status" value="1"/>
</dbReference>
<dbReference type="PROSITE" id="PS50888">
    <property type="entry name" value="BHLH"/>
    <property type="match status" value="1"/>
</dbReference>
<keyword id="KW-0238">DNA-binding</keyword>
<keyword id="KW-0539">Nucleus</keyword>
<keyword id="KW-1185">Reference proteome</keyword>
<keyword id="KW-0804">Transcription</keyword>
<keyword id="KW-0805">Transcription regulation</keyword>
<proteinExistence type="evidence at protein level"/>
<sequence length="260" mass="29364">MANFENLSSDFQTIAMDIYSSITQAADLNNNNSNLHFQTFHPSSTSLESLFLHHHQQQLLHFPGNSPDSSNNFSSTSSFLHSDHNIVDETKKRKALLPTLSSSETSGVSDNTNVIATETGSLRRGKRLKKKKEEEDEKEREVVHVRARRGQATDSHSLAERVRRGKINERLRCLQDMVPGCYKAMGMATMLDEIINYVQSLQNQVEFLSMKLTAASSFYDFNSETDAVDSMQRAKARETVEMGRQTRDGSPVFHLSTWSL</sequence>
<reference key="1">
    <citation type="journal article" date="2002" name="Genetics">
        <title>Three redundant brassinosteroid early response genes encode putative bHLH transcription factors required for normal growth.</title>
        <authorList>
            <person name="Friedrichsen D.M."/>
            <person name="Nemhauser J."/>
            <person name="Muramitsu T."/>
            <person name="Maloof J.N."/>
            <person name="Alonso J."/>
            <person name="Ecker J.R."/>
            <person name="Furuya M."/>
            <person name="Chory J."/>
        </authorList>
    </citation>
    <scope>NUCLEOTIDE SEQUENCE [MRNA]</scope>
    <scope>FUNCTION</scope>
    <scope>INDUCTION</scope>
    <scope>DISRUPTION PHENOTYPE</scope>
</reference>
<reference key="2">
    <citation type="journal article" date="2003" name="Mol. Biol. Evol.">
        <title>The basic helix-loop-helix transcription factor family in plants: a genome-wide study of protein structure and functional diversity.</title>
        <authorList>
            <person name="Heim M.A."/>
            <person name="Jakoby M."/>
            <person name="Werber M."/>
            <person name="Martin C."/>
            <person name="Weisshaar B."/>
            <person name="Bailey P.C."/>
        </authorList>
    </citation>
    <scope>NUCLEOTIDE SEQUENCE [MRNA]</scope>
    <scope>TISSUE SPECIFICITY</scope>
    <scope>GENE FAMILY</scope>
    <scope>NOMENCLATURE</scope>
    <source>
        <strain>cv. Columbia</strain>
    </source>
</reference>
<reference key="3">
    <citation type="journal article" date="2000" name="Nature">
        <title>Sequence and analysis of chromosome 1 of the plant Arabidopsis thaliana.</title>
        <authorList>
            <person name="Theologis A."/>
            <person name="Ecker J.R."/>
            <person name="Palm C.J."/>
            <person name="Federspiel N.A."/>
            <person name="Kaul S."/>
            <person name="White O."/>
            <person name="Alonso J."/>
            <person name="Altafi H."/>
            <person name="Araujo R."/>
            <person name="Bowman C.L."/>
            <person name="Brooks S.Y."/>
            <person name="Buehler E."/>
            <person name="Chan A."/>
            <person name="Chao Q."/>
            <person name="Chen H."/>
            <person name="Cheuk R.F."/>
            <person name="Chin C.W."/>
            <person name="Chung M.K."/>
            <person name="Conn L."/>
            <person name="Conway A.B."/>
            <person name="Conway A.R."/>
            <person name="Creasy T.H."/>
            <person name="Dewar K."/>
            <person name="Dunn P."/>
            <person name="Etgu P."/>
            <person name="Feldblyum T.V."/>
            <person name="Feng J.-D."/>
            <person name="Fong B."/>
            <person name="Fujii C.Y."/>
            <person name="Gill J.E."/>
            <person name="Goldsmith A.D."/>
            <person name="Haas B."/>
            <person name="Hansen N.F."/>
            <person name="Hughes B."/>
            <person name="Huizar L."/>
            <person name="Hunter J.L."/>
            <person name="Jenkins J."/>
            <person name="Johnson-Hopson C."/>
            <person name="Khan S."/>
            <person name="Khaykin E."/>
            <person name="Kim C.J."/>
            <person name="Koo H.L."/>
            <person name="Kremenetskaia I."/>
            <person name="Kurtz D.B."/>
            <person name="Kwan A."/>
            <person name="Lam B."/>
            <person name="Langin-Hooper S."/>
            <person name="Lee A."/>
            <person name="Lee J.M."/>
            <person name="Lenz C.A."/>
            <person name="Li J.H."/>
            <person name="Li Y.-P."/>
            <person name="Lin X."/>
            <person name="Liu S.X."/>
            <person name="Liu Z.A."/>
            <person name="Luros J.S."/>
            <person name="Maiti R."/>
            <person name="Marziali A."/>
            <person name="Militscher J."/>
            <person name="Miranda M."/>
            <person name="Nguyen M."/>
            <person name="Nierman W.C."/>
            <person name="Osborne B.I."/>
            <person name="Pai G."/>
            <person name="Peterson J."/>
            <person name="Pham P.K."/>
            <person name="Rizzo M."/>
            <person name="Rooney T."/>
            <person name="Rowley D."/>
            <person name="Sakano H."/>
            <person name="Salzberg S.L."/>
            <person name="Schwartz J.R."/>
            <person name="Shinn P."/>
            <person name="Southwick A.M."/>
            <person name="Sun H."/>
            <person name="Tallon L.J."/>
            <person name="Tambunga G."/>
            <person name="Toriumi M.J."/>
            <person name="Town C.D."/>
            <person name="Utterback T."/>
            <person name="Van Aken S."/>
            <person name="Vaysberg M."/>
            <person name="Vysotskaia V.S."/>
            <person name="Walker M."/>
            <person name="Wu D."/>
            <person name="Yu G."/>
            <person name="Fraser C.M."/>
            <person name="Venter J.C."/>
            <person name="Davis R.W."/>
        </authorList>
    </citation>
    <scope>NUCLEOTIDE SEQUENCE [LARGE SCALE GENOMIC DNA]</scope>
    <source>
        <strain>cv. Columbia</strain>
    </source>
</reference>
<reference key="4">
    <citation type="journal article" date="2017" name="Plant J.">
        <title>Araport11: a complete reannotation of the Arabidopsis thaliana reference genome.</title>
        <authorList>
            <person name="Cheng C.Y."/>
            <person name="Krishnakumar V."/>
            <person name="Chan A.P."/>
            <person name="Thibaud-Nissen F."/>
            <person name="Schobel S."/>
            <person name="Town C.D."/>
        </authorList>
    </citation>
    <scope>GENOME REANNOTATION</scope>
    <source>
        <strain>cv. Columbia</strain>
    </source>
</reference>
<reference key="5">
    <citation type="journal article" date="2002" name="Science">
        <title>Functional annotation of a full-length Arabidopsis cDNA collection.</title>
        <authorList>
            <person name="Seki M."/>
            <person name="Narusaka M."/>
            <person name="Kamiya A."/>
            <person name="Ishida J."/>
            <person name="Satou M."/>
            <person name="Sakurai T."/>
            <person name="Nakajima M."/>
            <person name="Enju A."/>
            <person name="Akiyama K."/>
            <person name="Oono Y."/>
            <person name="Muramatsu M."/>
            <person name="Hayashizaki Y."/>
            <person name="Kawai J."/>
            <person name="Carninci P."/>
            <person name="Itoh M."/>
            <person name="Ishii Y."/>
            <person name="Arakawa T."/>
            <person name="Shibata K."/>
            <person name="Shinagawa A."/>
            <person name="Shinozaki K."/>
        </authorList>
    </citation>
    <scope>NUCLEOTIDE SEQUENCE [LARGE SCALE MRNA]</scope>
    <source>
        <strain>cv. Columbia</strain>
    </source>
</reference>
<reference key="6">
    <citation type="journal article" date="2003" name="Science">
        <title>Empirical analysis of transcriptional activity in the Arabidopsis genome.</title>
        <authorList>
            <person name="Yamada K."/>
            <person name="Lim J."/>
            <person name="Dale J.M."/>
            <person name="Chen H."/>
            <person name="Shinn P."/>
            <person name="Palm C.J."/>
            <person name="Southwick A.M."/>
            <person name="Wu H.C."/>
            <person name="Kim C.J."/>
            <person name="Nguyen M."/>
            <person name="Pham P.K."/>
            <person name="Cheuk R.F."/>
            <person name="Karlin-Newmann G."/>
            <person name="Liu S.X."/>
            <person name="Lam B."/>
            <person name="Sakano H."/>
            <person name="Wu T."/>
            <person name="Yu G."/>
            <person name="Miranda M."/>
            <person name="Quach H.L."/>
            <person name="Tripp M."/>
            <person name="Chang C.H."/>
            <person name="Lee J.M."/>
            <person name="Toriumi M.J."/>
            <person name="Chan M.M."/>
            <person name="Tang C.C."/>
            <person name="Onodera C.S."/>
            <person name="Deng J.M."/>
            <person name="Akiyama K."/>
            <person name="Ansari Y."/>
            <person name="Arakawa T."/>
            <person name="Banh J."/>
            <person name="Banno F."/>
            <person name="Bowser L."/>
            <person name="Brooks S.Y."/>
            <person name="Carninci P."/>
            <person name="Chao Q."/>
            <person name="Choy N."/>
            <person name="Enju A."/>
            <person name="Goldsmith A.D."/>
            <person name="Gurjal M."/>
            <person name="Hansen N.F."/>
            <person name="Hayashizaki Y."/>
            <person name="Johnson-Hopson C."/>
            <person name="Hsuan V.W."/>
            <person name="Iida K."/>
            <person name="Karnes M."/>
            <person name="Khan S."/>
            <person name="Koesema E."/>
            <person name="Ishida J."/>
            <person name="Jiang P.X."/>
            <person name="Jones T."/>
            <person name="Kawai J."/>
            <person name="Kamiya A."/>
            <person name="Meyers C."/>
            <person name="Nakajima M."/>
            <person name="Narusaka M."/>
            <person name="Seki M."/>
            <person name="Sakurai T."/>
            <person name="Satou M."/>
            <person name="Tamse R."/>
            <person name="Vaysberg M."/>
            <person name="Wallender E.K."/>
            <person name="Wong C."/>
            <person name="Yamamura Y."/>
            <person name="Yuan S."/>
            <person name="Shinozaki K."/>
            <person name="Davis R.W."/>
            <person name="Theologis A."/>
            <person name="Ecker J.R."/>
        </authorList>
    </citation>
    <scope>NUCLEOTIDE SEQUENCE [LARGE SCALE MRNA]</scope>
    <source>
        <strain>cv. Columbia</strain>
    </source>
</reference>
<reference key="7">
    <citation type="journal article" date="2003" name="Plant Cell">
        <title>The Arabidopsis basic/helix-loop-helix transcription factor family.</title>
        <authorList>
            <person name="Toledo-Ortiz G."/>
            <person name="Huq E."/>
            <person name="Quail P.H."/>
        </authorList>
    </citation>
    <scope>GENE FAMILY</scope>
</reference>
<reference key="8">
    <citation type="journal article" date="2003" name="Plant Cell">
        <title>Update on the basic helix-loop-helix transcription factor gene family in Arabidopsis thaliana.</title>
        <authorList>
            <person name="Bailey P.C."/>
            <person name="Martin C."/>
            <person name="Toledo-Ortiz G."/>
            <person name="Quail P.H."/>
            <person name="Huq E."/>
            <person name="Heim M.A."/>
            <person name="Jakoby M."/>
            <person name="Werber M."/>
            <person name="Weisshaar B."/>
        </authorList>
    </citation>
    <scope>GENE FAMILY</scope>
    <scope>NOMENCLATURE</scope>
</reference>